<accession>A0RIM4</accession>
<protein>
    <recommendedName>
        <fullName>L-cystine uptake protein TcyP</fullName>
    </recommendedName>
    <alternativeName>
        <fullName>Transporter of cystine TcyP</fullName>
    </alternativeName>
</protein>
<dbReference type="EMBL" id="CP000485">
    <property type="protein sequence ID" value="ABK87067.1"/>
    <property type="status" value="ALT_INIT"/>
    <property type="molecule type" value="Genomic_DNA"/>
</dbReference>
<dbReference type="RefSeq" id="WP_001094329.1">
    <property type="nucleotide sequence ID" value="NC_008600.1"/>
</dbReference>
<dbReference type="SMR" id="A0RIM4"/>
<dbReference type="KEGG" id="btl:BALH_3843"/>
<dbReference type="HOGENOM" id="CLU_019375_0_1_9"/>
<dbReference type="GO" id="GO:0005886">
    <property type="term" value="C:plasma membrane"/>
    <property type="evidence" value="ECO:0007669"/>
    <property type="project" value="TreeGrafter"/>
</dbReference>
<dbReference type="GO" id="GO:0015184">
    <property type="term" value="F:L-cystine transmembrane transporter activity"/>
    <property type="evidence" value="ECO:0007669"/>
    <property type="project" value="TreeGrafter"/>
</dbReference>
<dbReference type="GO" id="GO:0015293">
    <property type="term" value="F:symporter activity"/>
    <property type="evidence" value="ECO:0007669"/>
    <property type="project" value="InterPro"/>
</dbReference>
<dbReference type="FunFam" id="1.10.3860.10:FF:000004">
    <property type="entry name" value="L-cystine transporter tcyP"/>
    <property type="match status" value="1"/>
</dbReference>
<dbReference type="Gene3D" id="1.10.3860.10">
    <property type="entry name" value="Sodium:dicarboxylate symporter"/>
    <property type="match status" value="1"/>
</dbReference>
<dbReference type="InterPro" id="IPR001991">
    <property type="entry name" value="Na-dicarboxylate_symporter"/>
</dbReference>
<dbReference type="InterPro" id="IPR036458">
    <property type="entry name" value="Na:dicarbo_symporter_sf"/>
</dbReference>
<dbReference type="PANTHER" id="PTHR42865:SF5">
    <property type="entry name" value="L-CYSTINE TRANSPORTER TCYP"/>
    <property type="match status" value="1"/>
</dbReference>
<dbReference type="PANTHER" id="PTHR42865">
    <property type="entry name" value="PROTON/GLUTAMATE-ASPARTATE SYMPORTER"/>
    <property type="match status" value="1"/>
</dbReference>
<dbReference type="Pfam" id="PF00375">
    <property type="entry name" value="SDF"/>
    <property type="match status" value="1"/>
</dbReference>
<dbReference type="PRINTS" id="PR00173">
    <property type="entry name" value="EDTRNSPORT"/>
</dbReference>
<dbReference type="SUPFAM" id="SSF118215">
    <property type="entry name" value="Proton glutamate symport protein"/>
    <property type="match status" value="1"/>
</dbReference>
<proteinExistence type="inferred from homology"/>
<reference key="1">
    <citation type="journal article" date="2007" name="J. Bacteriol.">
        <title>The complete genome sequence of Bacillus thuringiensis Al Hakam.</title>
        <authorList>
            <person name="Challacombe J.F."/>
            <person name="Altherr M.R."/>
            <person name="Xie G."/>
            <person name="Bhotika S.S."/>
            <person name="Brown N."/>
            <person name="Bruce D."/>
            <person name="Campbell C.S."/>
            <person name="Campbell M.L."/>
            <person name="Chen J."/>
            <person name="Chertkov O."/>
            <person name="Cleland C."/>
            <person name="Dimitrijevic M."/>
            <person name="Doggett N.A."/>
            <person name="Fawcett J.J."/>
            <person name="Glavina T."/>
            <person name="Goodwin L.A."/>
            <person name="Green L.D."/>
            <person name="Han C.S."/>
            <person name="Hill K.K."/>
            <person name="Hitchcock P."/>
            <person name="Jackson P.J."/>
            <person name="Keim P."/>
            <person name="Kewalramani A.R."/>
            <person name="Longmire J."/>
            <person name="Lucas S."/>
            <person name="Malfatti S."/>
            <person name="Martinez D."/>
            <person name="McMurry K."/>
            <person name="Meincke L.J."/>
            <person name="Misra M."/>
            <person name="Moseman B.L."/>
            <person name="Mundt M."/>
            <person name="Munk A.C."/>
            <person name="Okinaka R.T."/>
            <person name="Parson-Quintana B."/>
            <person name="Reilly L.P."/>
            <person name="Richardson P."/>
            <person name="Robinson D.L."/>
            <person name="Saunders E."/>
            <person name="Tapia R."/>
            <person name="Tesmer J.G."/>
            <person name="Thayer N."/>
            <person name="Thompson L.S."/>
            <person name="Tice H."/>
            <person name="Ticknor L.O."/>
            <person name="Wills P.L."/>
            <person name="Gilna P."/>
            <person name="Brettin T.S."/>
        </authorList>
    </citation>
    <scope>NUCLEOTIDE SEQUENCE [LARGE SCALE GENOMIC DNA]</scope>
    <source>
        <strain>Al Hakam</strain>
    </source>
</reference>
<keyword id="KW-0029">Amino-acid transport</keyword>
<keyword id="KW-0472">Membrane</keyword>
<keyword id="KW-0812">Transmembrane</keyword>
<keyword id="KW-1133">Transmembrane helix</keyword>
<keyword id="KW-0813">Transport</keyword>
<feature type="chain" id="PRO_0000279741" description="L-cystine uptake protein TcyP">
    <location>
        <begin position="1"/>
        <end position="464"/>
    </location>
</feature>
<feature type="transmembrane region" description="Helical" evidence="2">
    <location>
        <begin position="3"/>
        <end position="23"/>
    </location>
</feature>
<feature type="transmembrane region" description="Helical" evidence="2">
    <location>
        <begin position="34"/>
        <end position="54"/>
    </location>
</feature>
<feature type="transmembrane region" description="Helical" evidence="2">
    <location>
        <begin position="73"/>
        <end position="93"/>
    </location>
</feature>
<feature type="transmembrane region" description="Helical" evidence="2">
    <location>
        <begin position="107"/>
        <end position="127"/>
    </location>
</feature>
<feature type="transmembrane region" description="Helical" evidence="2">
    <location>
        <begin position="184"/>
        <end position="204"/>
    </location>
</feature>
<feature type="transmembrane region" description="Helical" evidence="2">
    <location>
        <begin position="225"/>
        <end position="245"/>
    </location>
</feature>
<feature type="transmembrane region" description="Helical" evidence="2">
    <location>
        <begin position="263"/>
        <end position="283"/>
    </location>
</feature>
<feature type="transmembrane region" description="Helical" evidence="2">
    <location>
        <begin position="347"/>
        <end position="367"/>
    </location>
</feature>
<feature type="transmembrane region" description="Helical" evidence="2">
    <location>
        <begin position="371"/>
        <end position="391"/>
    </location>
</feature>
<feature type="transmembrane region" description="Helical" evidence="2">
    <location>
        <begin position="395"/>
        <end position="415"/>
    </location>
</feature>
<comment type="function">
    <text evidence="1">Mediates uptake of L-cystine, the oxidized form of L-cysteine.</text>
</comment>
<comment type="subcellular location">
    <subcellularLocation>
        <location evidence="3">Membrane</location>
        <topology evidence="3">Multi-pass membrane protein</topology>
    </subcellularLocation>
</comment>
<comment type="similarity">
    <text evidence="3">Belongs to the dicarboxylate/amino acid:cation symporter (DAACS) (TC 2.A.23) family.</text>
</comment>
<comment type="sequence caution" evidence="3">
    <conflict type="erroneous initiation">
        <sequence resource="EMBL-CDS" id="ABK87067"/>
    </conflict>
</comment>
<name>TCYP_BACAH</name>
<evidence type="ECO:0000250" key="1"/>
<evidence type="ECO:0000255" key="2"/>
<evidence type="ECO:0000305" key="3"/>
<sequence length="464" mass="49256">MNTLLVGINVAVMLILVGVLYYMQRKHVSFNKRVFTALGIGIIFGLILQFIYEPTSKVIIESNTWFGLIGSGYVKLLQMIVMPLILVSIISAFTKLQLTKNLGKISGLIIGILILTTGIAAAVGIAASAGFDVSATGLQQGDAESARLKLVEERFTSIEKTTIPDKLLELLPTNPFLDLTGARPTSTISVVIFAAFIGIAFIGVKRKYPEQAELFKKMLDAVYAIVMRMVTLILRLTPYGVLALMAKTVAGSDINAILKLGNFVLASYVALIVMFVIHLLLIALSGLNPIQYLKKVFPVLTFAFTSRSSAGAMPLNIEAQKEKLGISEGIANFAASFGVSIGQNGCAGIYPAMLAMMVAPTVGIDPLQPQFILTLIAVVAISSFGVAGVGGGATFAALIVLSTMNLPIGIVALVISVEPLIDMGRTALNVSGSMTAGLISSKWLGELDQDTYNQDDTKTGEIAS</sequence>
<gene>
    <name type="ordered locus">BALH_3843</name>
</gene>
<organism>
    <name type="scientific">Bacillus thuringiensis (strain Al Hakam)</name>
    <dbReference type="NCBI Taxonomy" id="412694"/>
    <lineage>
        <taxon>Bacteria</taxon>
        <taxon>Bacillati</taxon>
        <taxon>Bacillota</taxon>
        <taxon>Bacilli</taxon>
        <taxon>Bacillales</taxon>
        <taxon>Bacillaceae</taxon>
        <taxon>Bacillus</taxon>
        <taxon>Bacillus cereus group</taxon>
    </lineage>
</organism>